<feature type="chain" id="PRO_0000073595" description="Parvalbumin alpha">
    <location>
        <begin position="1"/>
        <end position="108"/>
    </location>
</feature>
<feature type="domain" description="EF-hand 1" evidence="2">
    <location>
        <begin position="37"/>
        <end position="72"/>
    </location>
</feature>
<feature type="domain" description="EF-hand 2" evidence="2">
    <location>
        <begin position="76"/>
        <end position="108"/>
    </location>
</feature>
<feature type="binding site" evidence="2 5 6 8 9 10">
    <location>
        <position position="50"/>
    </location>
    <ligand>
        <name>Ca(2+)</name>
        <dbReference type="ChEBI" id="CHEBI:29108"/>
        <label>1</label>
    </ligand>
</feature>
<feature type="binding site" evidence="2 5 6 8 9 10">
    <location>
        <position position="52"/>
    </location>
    <ligand>
        <name>Ca(2+)</name>
        <dbReference type="ChEBI" id="CHEBI:29108"/>
        <label>1</label>
    </ligand>
</feature>
<feature type="binding site" evidence="2 5 6 8 9 10">
    <location>
        <position position="54"/>
    </location>
    <ligand>
        <name>Ca(2+)</name>
        <dbReference type="ChEBI" id="CHEBI:29108"/>
        <label>1</label>
    </ligand>
</feature>
<feature type="binding site" evidence="5 6 8 9 10">
    <location>
        <position position="56"/>
    </location>
    <ligand>
        <name>Ca(2+)</name>
        <dbReference type="ChEBI" id="CHEBI:29108"/>
        <label>1</label>
    </ligand>
</feature>
<feature type="binding site" evidence="5 6 8 9">
    <location>
        <position position="58"/>
    </location>
    <ligand>
        <name>Ca(2+)</name>
        <dbReference type="ChEBI" id="CHEBI:29108"/>
        <label>1</label>
    </ligand>
</feature>
<feature type="binding site" evidence="2 5 6 8 9">
    <location>
        <position position="61"/>
    </location>
    <ligand>
        <name>Ca(2+)</name>
        <dbReference type="ChEBI" id="CHEBI:29108"/>
        <label>1</label>
    </ligand>
</feature>
<feature type="binding site" evidence="2 5 6 8 9 10">
    <location>
        <position position="89"/>
    </location>
    <ligand>
        <name>Ca(2+)</name>
        <dbReference type="ChEBI" id="CHEBI:29108"/>
        <label>2</label>
    </ligand>
</feature>
<feature type="binding site" evidence="2 5 6 8 9 10">
    <location>
        <position position="91"/>
    </location>
    <ligand>
        <name>Ca(2+)</name>
        <dbReference type="ChEBI" id="CHEBI:29108"/>
        <label>2</label>
    </ligand>
</feature>
<feature type="binding site" evidence="2 5 6 8 9 10">
    <location>
        <position position="93"/>
    </location>
    <ligand>
        <name>Ca(2+)</name>
        <dbReference type="ChEBI" id="CHEBI:29108"/>
        <label>2</label>
    </ligand>
</feature>
<feature type="binding site" evidence="2 5 6 8 9 10">
    <location>
        <position position="95"/>
    </location>
    <ligand>
        <name>Ca(2+)</name>
        <dbReference type="ChEBI" id="CHEBI:29108"/>
        <label>2</label>
    </ligand>
</feature>
<feature type="binding site" evidence="2 5 6 8 9 10">
    <location>
        <position position="100"/>
    </location>
    <ligand>
        <name>Ca(2+)</name>
        <dbReference type="ChEBI" id="CHEBI:29108"/>
        <label>2</label>
    </ligand>
</feature>
<feature type="modified residue" description="N-acetylalanine" evidence="4">
    <location>
        <position position="1"/>
    </location>
</feature>
<feature type="sequence variant" description="In alpha-2." evidence="3">
    <original>K</original>
    <variation>KL</variation>
    <location>
        <position position="11"/>
    </location>
</feature>
<feature type="sequence variant" description="In alpha-2." evidence="3">
    <original>K</original>
    <variation>A</variation>
    <location>
        <position position="27"/>
    </location>
</feature>
<feature type="sequence variant" description="In alpha-2." evidence="3">
    <original>L</original>
    <variation>K</variation>
    <location>
        <position position="31"/>
    </location>
</feature>
<feature type="helix" evidence="11">
    <location>
        <begin position="1"/>
        <end position="4"/>
    </location>
</feature>
<feature type="helix" evidence="11">
    <location>
        <begin position="7"/>
        <end position="16"/>
    </location>
</feature>
<feature type="turn" evidence="12">
    <location>
        <begin position="18"/>
        <end position="21"/>
    </location>
</feature>
<feature type="helix" evidence="11">
    <location>
        <begin position="25"/>
        <end position="31"/>
    </location>
</feature>
<feature type="turn" evidence="12">
    <location>
        <begin position="33"/>
        <end position="36"/>
    </location>
</feature>
<feature type="helix" evidence="11">
    <location>
        <begin position="39"/>
        <end position="49"/>
    </location>
</feature>
<feature type="strand" evidence="11">
    <location>
        <begin position="54"/>
        <end position="57"/>
    </location>
</feature>
<feature type="helix" evidence="11">
    <location>
        <begin position="59"/>
        <end position="63"/>
    </location>
</feature>
<feature type="helix" evidence="11">
    <location>
        <begin position="65"/>
        <end position="68"/>
    </location>
</feature>
<feature type="helix" evidence="11">
    <location>
        <begin position="78"/>
        <end position="88"/>
    </location>
</feature>
<feature type="strand" evidence="11">
    <location>
        <begin position="93"/>
        <end position="96"/>
    </location>
</feature>
<feature type="helix" evidence="11">
    <location>
        <begin position="98"/>
        <end position="106"/>
    </location>
</feature>
<sequence>AKDLLKADDIKKALDAVKAEGSFNHKKFFALVGLKAMSANDVKKVFKAIDADASGFIEEEELKFVLKSFAADGRDLTDAETKAFLKAADKDGDGKIGIDEFETLVHEA</sequence>
<keyword id="KW-0002">3D-structure</keyword>
<keyword id="KW-0007">Acetylation</keyword>
<keyword id="KW-0106">Calcium</keyword>
<keyword id="KW-0903">Direct protein sequencing</keyword>
<keyword id="KW-0479">Metal-binding</keyword>
<keyword id="KW-0514">Muscle protein</keyword>
<keyword id="KW-1185">Reference proteome</keyword>
<keyword id="KW-0677">Repeat</keyword>
<dbReference type="PIR" id="A67143">
    <property type="entry name" value="PVPK"/>
</dbReference>
<dbReference type="PDB" id="1PVA">
    <property type="method" value="X-ray"/>
    <property type="resolution" value="1.65 A"/>
    <property type="chains" value="A/B=1-108"/>
</dbReference>
<dbReference type="PDB" id="2PAS">
    <property type="method" value="NMR"/>
    <property type="chains" value="A=1-108"/>
</dbReference>
<dbReference type="PDB" id="3PAT">
    <property type="method" value="NMR"/>
    <property type="chains" value="A=1-108"/>
</dbReference>
<dbReference type="PDBsum" id="1PVA"/>
<dbReference type="PDBsum" id="2PAS"/>
<dbReference type="PDBsum" id="3PAT"/>
<dbReference type="BMRB" id="P02628"/>
<dbReference type="SMR" id="P02628"/>
<dbReference type="FunCoup" id="P02628">
    <property type="interactions" value="307"/>
</dbReference>
<dbReference type="STRING" id="8010.ENSELUP00000022398"/>
<dbReference type="InParanoid" id="P02628"/>
<dbReference type="EvolutionaryTrace" id="P02628"/>
<dbReference type="Proteomes" id="UP000265140">
    <property type="component" value="Unassembled WGS sequence"/>
</dbReference>
<dbReference type="GO" id="GO:0005737">
    <property type="term" value="C:cytoplasm"/>
    <property type="evidence" value="ECO:0007669"/>
    <property type="project" value="TreeGrafter"/>
</dbReference>
<dbReference type="GO" id="GO:0005509">
    <property type="term" value="F:calcium ion binding"/>
    <property type="evidence" value="ECO:0000314"/>
    <property type="project" value="CAFA"/>
</dbReference>
<dbReference type="DisProt" id="DP00550"/>
<dbReference type="FunFam" id="1.10.238.10:FF:000060">
    <property type="entry name" value="Parvalbumin, thymic"/>
    <property type="match status" value="1"/>
</dbReference>
<dbReference type="Gene3D" id="1.10.238.10">
    <property type="entry name" value="EF-hand"/>
    <property type="match status" value="1"/>
</dbReference>
<dbReference type="InterPro" id="IPR011992">
    <property type="entry name" value="EF-hand-dom_pair"/>
</dbReference>
<dbReference type="InterPro" id="IPR018247">
    <property type="entry name" value="EF_Hand_1_Ca_BS"/>
</dbReference>
<dbReference type="InterPro" id="IPR002048">
    <property type="entry name" value="EF_hand_dom"/>
</dbReference>
<dbReference type="InterPro" id="IPR008080">
    <property type="entry name" value="Parvalbumin"/>
</dbReference>
<dbReference type="PANTHER" id="PTHR11653">
    <property type="entry name" value="PARVALBUMIN ALPHA"/>
    <property type="match status" value="1"/>
</dbReference>
<dbReference type="PANTHER" id="PTHR11653:SF21">
    <property type="entry name" value="PARVALBUMIN-7"/>
    <property type="match status" value="1"/>
</dbReference>
<dbReference type="Pfam" id="PF13499">
    <property type="entry name" value="EF-hand_7"/>
    <property type="match status" value="1"/>
</dbReference>
<dbReference type="PRINTS" id="PR01697">
    <property type="entry name" value="PARVALBUMIN"/>
</dbReference>
<dbReference type="SMART" id="SM00054">
    <property type="entry name" value="EFh"/>
    <property type="match status" value="2"/>
</dbReference>
<dbReference type="SUPFAM" id="SSF47473">
    <property type="entry name" value="EF-hand"/>
    <property type="match status" value="1"/>
</dbReference>
<dbReference type="PROSITE" id="PS00018">
    <property type="entry name" value="EF_HAND_1"/>
    <property type="match status" value="2"/>
</dbReference>
<dbReference type="PROSITE" id="PS50222">
    <property type="entry name" value="EF_HAND_2"/>
    <property type="match status" value="2"/>
</dbReference>
<protein>
    <recommendedName>
        <fullName>Parvalbumin alpha</fullName>
    </recommendedName>
    <alternativeName>
        <fullName>Parvalbumin III</fullName>
    </alternativeName>
    <alternativeName>
        <fullName>Parvalbumin pI 5.0</fullName>
    </alternativeName>
    <alternativeName>
        <fullName>Parvalbumin-3</fullName>
    </alternativeName>
</protein>
<reference key="1">
    <citation type="journal article" date="1973" name="FEBS Lett.">
        <title>The amino acid sequence of the pike (Esox lucius) parvalbumin 3.</title>
        <authorList>
            <person name="Frankenne F."/>
            <person name="Joassin L."/>
            <person name="Gerday C."/>
        </authorList>
    </citation>
    <scope>PROTEIN SEQUENCE</scope>
    <scope>ACETYLATION AT ALA-1</scope>
</reference>
<reference key="2">
    <citation type="submission" date="1975-01" db="PIR data bank">
        <authorList>
            <person name="Gerday C."/>
        </authorList>
    </citation>
    <scope>SEQUENCE REVISION</scope>
</reference>
<reference key="3">
    <citation type="journal article" date="2009" name="Biochim. Biophys. Acta">
        <title>Sequence microheterogeneity of parvalbumin pI 5.0 of pike: a mass spectrometric study.</title>
        <authorList>
            <person name="Permyakov S.E."/>
            <person name="Karnoup A.S."/>
            <person name="Bakunts A.G."/>
            <person name="Permyakov E.A."/>
        </authorList>
    </citation>
    <scope>PROTEIN SEQUENCE</scope>
    <scope>IDENTIFICATION BY MASS SPECTROMETRY</scope>
    <scope>VARIANTS LEU-11 INS; ALA-27 AND LYS-31</scope>
    <source>
        <tissue>White muscle</tissue>
    </source>
</reference>
<reference key="4">
    <citation type="journal article" date="1988" name="J. Mol. Biol.">
        <title>Two-dimensional 1H nuclear magnetic resonance study of pike pI 5.0 parvalbumin (Esox lucius). Sequential resonance assignments and folding of the polypeptide chain.</title>
        <authorList>
            <person name="Padilla A."/>
            <person name="Cave A."/>
            <person name="Parello J."/>
        </authorList>
    </citation>
    <scope>STRUCTURE BY NMR</scope>
</reference>
<reference key="5">
    <citation type="journal article" date="1989" name="J. Mol. Biol.">
        <authorList>
            <person name="Padilla A."/>
            <person name="Cave A."/>
            <person name="Parello J."/>
        </authorList>
    </citation>
    <scope>ERRATUM OF PUBMED:3221403</scope>
</reference>
<reference key="6">
    <citation type="journal article" date="1993" name="Biochemistry">
        <title>Symmetrical rearrangement of the cation-binding sites of parvalbumin upon Ca2+/Mg2+ exchange. A study by 1H 2D NMR.</title>
        <authorList>
            <person name="Blancuzzi Y."/>
            <person name="Padilla A."/>
            <person name="Parello J."/>
            <person name="Cave A."/>
        </authorList>
    </citation>
    <scope>STRUCTURE BY NMR</scope>
</reference>
<reference evidence="9 10" key="7">
    <citation type="submission" date="1994-03" db="PDB data bank">
        <title>Comparison between the Crystal and the Solution Structures of the EF Hand Parvalbumin.</title>
        <authorList>
            <person name="Padilla A."/>
            <person name="Cave A."/>
            <person name="Parello J."/>
            <person name="Etienne G."/>
            <person name="Baldellon C."/>
        </authorList>
    </citation>
    <scope>STRUCTURE BY NMR IN COMPLEXES WITH CA(2+)</scope>
</reference>
<reference evidence="8" key="8">
    <citation type="submission" date="1995-01" db="PDB data bank">
        <title>Comparison between the crystal and the solution structures of the ef hand parvalbumin (alpha component from pike muscle).</title>
        <authorList>
            <person name="Roquet F."/>
            <person name="Rambaud J."/>
            <person name="Declercq J.P."/>
            <person name="Tinant B."/>
            <person name="Baldellon C."/>
            <person name="Padilla A."/>
            <person name="Cave A."/>
            <person name="Parello J."/>
        </authorList>
    </citation>
    <scope>X-RAY CRYSTALLOGRAPHY (1.65 ANGSTROMS) IN COMPLEX WITH CA(2+)</scope>
</reference>
<reference key="9">
    <citation type="journal article" date="1996" name="Eur. J. Biochem.">
        <title>Assignment of 13C resonances and analysis of relaxation properties and internal dynamics of pike parvalbumin by 13C-NMR at natural abundance.</title>
        <authorList>
            <person name="Alattia T."/>
            <person name="Padilla A."/>
            <person name="Cave A."/>
        </authorList>
    </citation>
    <scope>STRUCTURE BY NMR</scope>
</reference>
<proteinExistence type="evidence at protein level"/>
<accession>P02628</accession>
<evidence type="ECO:0000250" key="1">
    <source>
        <dbReference type="UniProtKB" id="P86432"/>
    </source>
</evidence>
<evidence type="ECO:0000255" key="2">
    <source>
        <dbReference type="PROSITE-ProRule" id="PRU00448"/>
    </source>
</evidence>
<evidence type="ECO:0000269" key="3">
    <source>
    </source>
</evidence>
<evidence type="ECO:0000269" key="4">
    <source>
    </source>
</evidence>
<evidence type="ECO:0000269" key="5">
    <source ref="7"/>
</evidence>
<evidence type="ECO:0000269" key="6">
    <source ref="8"/>
</evidence>
<evidence type="ECO:0000305" key="7"/>
<evidence type="ECO:0007744" key="8">
    <source>
        <dbReference type="PDB" id="1PVA"/>
    </source>
</evidence>
<evidence type="ECO:0007744" key="9">
    <source>
        <dbReference type="PDB" id="2PAS"/>
    </source>
</evidence>
<evidence type="ECO:0007744" key="10">
    <source>
        <dbReference type="PDB" id="3PAT"/>
    </source>
</evidence>
<evidence type="ECO:0007829" key="11">
    <source>
        <dbReference type="PDB" id="1PVA"/>
    </source>
</evidence>
<evidence type="ECO:0007829" key="12">
    <source>
        <dbReference type="PDB" id="2PAS"/>
    </source>
</evidence>
<comment type="function">
    <text evidence="1 5 6">In muscle, parvalbumin is thought to be involved in relaxation after contraction (By similarity). It binds two calcium ions (Ref.7, Ref.8).</text>
</comment>
<comment type="miscellaneous">
    <text>This is the major component, having an isoelectric point of 5.0.</text>
</comment>
<comment type="similarity">
    <text evidence="7">Belongs to the parvalbumin family.</text>
</comment>
<comment type="caution">
    <text evidence="7">This protein is more closely related to beta-type parvalbumins then to alpha-type.</text>
</comment>
<organism>
    <name type="scientific">Esox lucius</name>
    <name type="common">Northern pike</name>
    <dbReference type="NCBI Taxonomy" id="8010"/>
    <lineage>
        <taxon>Eukaryota</taxon>
        <taxon>Metazoa</taxon>
        <taxon>Chordata</taxon>
        <taxon>Craniata</taxon>
        <taxon>Vertebrata</taxon>
        <taxon>Euteleostomi</taxon>
        <taxon>Actinopterygii</taxon>
        <taxon>Neopterygii</taxon>
        <taxon>Teleostei</taxon>
        <taxon>Protacanthopterygii</taxon>
        <taxon>Esociformes</taxon>
        <taxon>Esocidae</taxon>
        <taxon>Esox</taxon>
    </lineage>
</organism>
<name>PRVA_ESOLU</name>